<sequence>MIVMFQKPRGTRDFLPEEMKKRRFVENKLREVFERYGYKEILTPTFESFELIAKKTGEEIRKQLYVFKDHGGREMALRPEMTSPVVRFYLNELKNLQKPLRLYYFANCFRYERPQAGRFREFWQMGCELIGCKEPLADAEVLNLAMDGLINIGLDFDVHIGHLGVLKGVLEKFNVSEEEEVKIRRLIDKEDYDNLKIYLTQILGEEKKELIFEILKFKGSREVLDELKEILKDFPKSMEAINNLEEILEFVIHDKYTINLGIARGLDYYTGMVFEIYGKKGAKQICGGGRYDNLIETFGGEPTPAVGFAYGFDRIMMNIDDLDIEEESILIIPVKKDKELIKKSLIIADKLRKAGKIVELEIMGRKLRKALDYANSRGFKKVIIVGEKELNEGKVTVKDMITGEQKLIGIDELTNF</sequence>
<organism>
    <name type="scientific">Methanocaldococcus jannaschii (strain ATCC 43067 / DSM 2661 / JAL-1 / JCM 10045 / NBRC 100440)</name>
    <name type="common">Methanococcus jannaschii</name>
    <dbReference type="NCBI Taxonomy" id="243232"/>
    <lineage>
        <taxon>Archaea</taxon>
        <taxon>Methanobacteriati</taxon>
        <taxon>Methanobacteriota</taxon>
        <taxon>Methanomada group</taxon>
        <taxon>Methanococci</taxon>
        <taxon>Methanococcales</taxon>
        <taxon>Methanocaldococcaceae</taxon>
        <taxon>Methanocaldococcus</taxon>
    </lineage>
</organism>
<dbReference type="EC" id="6.1.1.21"/>
<dbReference type="EMBL" id="L77117">
    <property type="protein sequence ID" value="AAB99003.1"/>
    <property type="molecule type" value="Genomic_DNA"/>
</dbReference>
<dbReference type="PIR" id="G64424">
    <property type="entry name" value="G64424"/>
</dbReference>
<dbReference type="SMR" id="Q58406"/>
<dbReference type="FunCoup" id="Q58406">
    <property type="interactions" value="205"/>
</dbReference>
<dbReference type="STRING" id="243232.MJ_1000"/>
<dbReference type="PaxDb" id="243232-MJ_1000"/>
<dbReference type="EnsemblBacteria" id="AAB99003">
    <property type="protein sequence ID" value="AAB99003"/>
    <property type="gene ID" value="MJ_1000"/>
</dbReference>
<dbReference type="KEGG" id="mja:MJ_1000"/>
<dbReference type="eggNOG" id="arCOG00404">
    <property type="taxonomic scope" value="Archaea"/>
</dbReference>
<dbReference type="HOGENOM" id="CLU_025113_3_1_2"/>
<dbReference type="InParanoid" id="Q58406"/>
<dbReference type="PhylomeDB" id="Q58406"/>
<dbReference type="BRENDA" id="6.1.1.21">
    <property type="organism ID" value="3260"/>
</dbReference>
<dbReference type="Proteomes" id="UP000000805">
    <property type="component" value="Chromosome"/>
</dbReference>
<dbReference type="GO" id="GO:0005737">
    <property type="term" value="C:cytoplasm"/>
    <property type="evidence" value="ECO:0007669"/>
    <property type="project" value="UniProtKB-SubCell"/>
</dbReference>
<dbReference type="GO" id="GO:0005524">
    <property type="term" value="F:ATP binding"/>
    <property type="evidence" value="ECO:0007669"/>
    <property type="project" value="UniProtKB-UniRule"/>
</dbReference>
<dbReference type="GO" id="GO:0004821">
    <property type="term" value="F:histidine-tRNA ligase activity"/>
    <property type="evidence" value="ECO:0000318"/>
    <property type="project" value="GO_Central"/>
</dbReference>
<dbReference type="GO" id="GO:0006427">
    <property type="term" value="P:histidyl-tRNA aminoacylation"/>
    <property type="evidence" value="ECO:0000318"/>
    <property type="project" value="GO_Central"/>
</dbReference>
<dbReference type="GO" id="GO:0000105">
    <property type="term" value="P:L-histidine biosynthetic process"/>
    <property type="evidence" value="ECO:0007669"/>
    <property type="project" value="InterPro"/>
</dbReference>
<dbReference type="CDD" id="cd00773">
    <property type="entry name" value="HisRS-like_core"/>
    <property type="match status" value="1"/>
</dbReference>
<dbReference type="Gene3D" id="3.40.50.800">
    <property type="entry name" value="Anticodon-binding domain"/>
    <property type="match status" value="1"/>
</dbReference>
<dbReference type="Gene3D" id="3.30.930.10">
    <property type="entry name" value="Bira Bifunctional Protein, Domain 2"/>
    <property type="match status" value="1"/>
</dbReference>
<dbReference type="HAMAP" id="MF_00127">
    <property type="entry name" value="His_tRNA_synth"/>
    <property type="match status" value="1"/>
</dbReference>
<dbReference type="HAMAP" id="MF_00125">
    <property type="entry name" value="HisZ"/>
    <property type="match status" value="1"/>
</dbReference>
<dbReference type="InterPro" id="IPR006195">
    <property type="entry name" value="aa-tRNA-synth_II"/>
</dbReference>
<dbReference type="InterPro" id="IPR045864">
    <property type="entry name" value="aa-tRNA-synth_II/BPL/LPL"/>
</dbReference>
<dbReference type="InterPro" id="IPR004154">
    <property type="entry name" value="Anticodon-bd"/>
</dbReference>
<dbReference type="InterPro" id="IPR036621">
    <property type="entry name" value="Anticodon-bd_dom_sf"/>
</dbReference>
<dbReference type="InterPro" id="IPR015807">
    <property type="entry name" value="His-tRNA-ligase"/>
</dbReference>
<dbReference type="InterPro" id="IPR041715">
    <property type="entry name" value="HisRS-like_core"/>
</dbReference>
<dbReference type="InterPro" id="IPR004516">
    <property type="entry name" value="HisRS/HisZ"/>
</dbReference>
<dbReference type="InterPro" id="IPR004517">
    <property type="entry name" value="HisZ"/>
</dbReference>
<dbReference type="NCBIfam" id="TIGR00442">
    <property type="entry name" value="hisS"/>
    <property type="match status" value="1"/>
</dbReference>
<dbReference type="NCBIfam" id="TIGR00443">
    <property type="entry name" value="hisZ_biosyn_reg"/>
    <property type="match status" value="1"/>
</dbReference>
<dbReference type="PANTHER" id="PTHR43707:SF1">
    <property type="entry name" value="HISTIDINE--TRNA LIGASE, MITOCHONDRIAL-RELATED"/>
    <property type="match status" value="1"/>
</dbReference>
<dbReference type="PANTHER" id="PTHR43707">
    <property type="entry name" value="HISTIDYL-TRNA SYNTHETASE"/>
    <property type="match status" value="1"/>
</dbReference>
<dbReference type="Pfam" id="PF03129">
    <property type="entry name" value="HGTP_anticodon"/>
    <property type="match status" value="1"/>
</dbReference>
<dbReference type="Pfam" id="PF13393">
    <property type="entry name" value="tRNA-synt_His"/>
    <property type="match status" value="1"/>
</dbReference>
<dbReference type="PIRSF" id="PIRSF001549">
    <property type="entry name" value="His-tRNA_synth"/>
    <property type="match status" value="1"/>
</dbReference>
<dbReference type="SUPFAM" id="SSF52954">
    <property type="entry name" value="Class II aaRS ABD-related"/>
    <property type="match status" value="1"/>
</dbReference>
<dbReference type="SUPFAM" id="SSF55681">
    <property type="entry name" value="Class II aaRS and biotin synthetases"/>
    <property type="match status" value="1"/>
</dbReference>
<dbReference type="PROSITE" id="PS50862">
    <property type="entry name" value="AA_TRNA_LIGASE_II"/>
    <property type="match status" value="1"/>
</dbReference>
<reference key="1">
    <citation type="journal article" date="1996" name="Science">
        <title>Complete genome sequence of the methanogenic archaeon, Methanococcus jannaschii.</title>
        <authorList>
            <person name="Bult C.J."/>
            <person name="White O."/>
            <person name="Olsen G.J."/>
            <person name="Zhou L."/>
            <person name="Fleischmann R.D."/>
            <person name="Sutton G.G."/>
            <person name="Blake J.A."/>
            <person name="FitzGerald L.M."/>
            <person name="Clayton R.A."/>
            <person name="Gocayne J.D."/>
            <person name="Kerlavage A.R."/>
            <person name="Dougherty B.A."/>
            <person name="Tomb J.-F."/>
            <person name="Adams M.D."/>
            <person name="Reich C.I."/>
            <person name="Overbeek R."/>
            <person name="Kirkness E.F."/>
            <person name="Weinstock K.G."/>
            <person name="Merrick J.M."/>
            <person name="Glodek A."/>
            <person name="Scott J.L."/>
            <person name="Geoghagen N.S.M."/>
            <person name="Weidman J.F."/>
            <person name="Fuhrmann J.L."/>
            <person name="Nguyen D."/>
            <person name="Utterback T.R."/>
            <person name="Kelley J.M."/>
            <person name="Peterson J.D."/>
            <person name="Sadow P.W."/>
            <person name="Hanna M.C."/>
            <person name="Cotton M.D."/>
            <person name="Roberts K.M."/>
            <person name="Hurst M.A."/>
            <person name="Kaine B.P."/>
            <person name="Borodovsky M."/>
            <person name="Klenk H.-P."/>
            <person name="Fraser C.M."/>
            <person name="Smith H.O."/>
            <person name="Woese C.R."/>
            <person name="Venter J.C."/>
        </authorList>
    </citation>
    <scope>NUCLEOTIDE SEQUENCE [LARGE SCALE GENOMIC DNA]</scope>
    <source>
        <strain>ATCC 43067 / DSM 2661 / JAL-1 / JCM 10045 / NBRC 100440</strain>
    </source>
</reference>
<keyword id="KW-0030">Aminoacyl-tRNA synthetase</keyword>
<keyword id="KW-0067">ATP-binding</keyword>
<keyword id="KW-0963">Cytoplasm</keyword>
<keyword id="KW-0436">Ligase</keyword>
<keyword id="KW-0547">Nucleotide-binding</keyword>
<keyword id="KW-0648">Protein biosynthesis</keyword>
<keyword id="KW-1185">Reference proteome</keyword>
<evidence type="ECO:0000250" key="1"/>
<evidence type="ECO:0000305" key="2"/>
<accession>Q58406</accession>
<gene>
    <name type="primary">hisS</name>
    <name type="ordered locus">MJ1000</name>
</gene>
<feature type="chain" id="PRO_0000136312" description="Histidine--tRNA ligase">
    <location>
        <begin position="1"/>
        <end position="416"/>
    </location>
</feature>
<name>SYH_METJA</name>
<protein>
    <recommendedName>
        <fullName>Histidine--tRNA ligase</fullName>
        <ecNumber>6.1.1.21</ecNumber>
    </recommendedName>
    <alternativeName>
        <fullName>Histidyl-tRNA synthetase</fullName>
        <shortName>HisRS</shortName>
    </alternativeName>
</protein>
<proteinExistence type="inferred from homology"/>
<comment type="catalytic activity">
    <reaction>
        <text>tRNA(His) + L-histidine + ATP = L-histidyl-tRNA(His) + AMP + diphosphate + H(+)</text>
        <dbReference type="Rhea" id="RHEA:17313"/>
        <dbReference type="Rhea" id="RHEA-COMP:9665"/>
        <dbReference type="Rhea" id="RHEA-COMP:9689"/>
        <dbReference type="ChEBI" id="CHEBI:15378"/>
        <dbReference type="ChEBI" id="CHEBI:30616"/>
        <dbReference type="ChEBI" id="CHEBI:33019"/>
        <dbReference type="ChEBI" id="CHEBI:57595"/>
        <dbReference type="ChEBI" id="CHEBI:78442"/>
        <dbReference type="ChEBI" id="CHEBI:78527"/>
        <dbReference type="ChEBI" id="CHEBI:456215"/>
        <dbReference type="EC" id="6.1.1.21"/>
    </reaction>
</comment>
<comment type="subcellular location">
    <subcellularLocation>
        <location evidence="1">Cytoplasm</location>
    </subcellularLocation>
</comment>
<comment type="similarity">
    <text evidence="2">Belongs to the class-II aminoacyl-tRNA synthetase family.</text>
</comment>